<proteinExistence type="inferred from homology"/>
<reference key="1">
    <citation type="submission" date="2006-02" db="EMBL/GenBank/DDBJ databases">
        <title>Complete sequence of chromosome of Jannaschia sp. CCS1.</title>
        <authorList>
            <consortium name="US DOE Joint Genome Institute"/>
            <person name="Copeland A."/>
            <person name="Lucas S."/>
            <person name="Lapidus A."/>
            <person name="Barry K."/>
            <person name="Detter J.C."/>
            <person name="Glavina del Rio T."/>
            <person name="Hammon N."/>
            <person name="Israni S."/>
            <person name="Pitluck S."/>
            <person name="Brettin T."/>
            <person name="Bruce D."/>
            <person name="Han C."/>
            <person name="Tapia R."/>
            <person name="Gilna P."/>
            <person name="Chertkov O."/>
            <person name="Saunders E."/>
            <person name="Schmutz J."/>
            <person name="Larimer F."/>
            <person name="Land M."/>
            <person name="Kyrpides N."/>
            <person name="Lykidis A."/>
            <person name="Moran M.A."/>
            <person name="Belas R."/>
            <person name="Ye W."/>
            <person name="Buchan A."/>
            <person name="Gonzalez J.M."/>
            <person name="Schell M.A."/>
            <person name="Richardson P."/>
        </authorList>
    </citation>
    <scope>NUCLEOTIDE SEQUENCE [LARGE SCALE GENOMIC DNA]</scope>
    <source>
        <strain>CCS1</strain>
    </source>
</reference>
<protein>
    <recommendedName>
        <fullName evidence="1">GTPase Obg</fullName>
        <ecNumber evidence="1">3.6.5.-</ecNumber>
    </recommendedName>
    <alternativeName>
        <fullName evidence="1">GTP-binding protein Obg</fullName>
    </alternativeName>
</protein>
<sequence length="344" mass="36638">MKFLDLAKVYIRSGAGGGGSVSFRREKYIEYGGPDGGDGGGGGNVYIEVVEGLNTLIDFRYQQHFFAKNGQPGMGKQRTGKDGADIVLRVPAGTEVLEEDQETLIADLEEVGQRICIAKGGNGGFGNLHFKSATNQAPRRANPGQEGVERTIWLRLKLIADVGLLGLPNAGKSTFLAATSNARPKIADYPFTTLVPNLGVVGVDGAEFVIADIPGLIEGASEGRGLGDTFLGHVERCAALLHLVDGTSEDVVGDYQTIIAELEAYGGELALKPRITALNKIDAIEPEELAKKRAALGKVAGNLMEMSGVARTGVTEVLRVLRARVDADRKAARDALEEPDRWRP</sequence>
<dbReference type="EC" id="3.6.5.-" evidence="1"/>
<dbReference type="EMBL" id="CP000264">
    <property type="protein sequence ID" value="ABD55200.1"/>
    <property type="status" value="ALT_INIT"/>
    <property type="molecule type" value="Genomic_DNA"/>
</dbReference>
<dbReference type="RefSeq" id="WP_011455404.1">
    <property type="nucleotide sequence ID" value="NC_007802.1"/>
</dbReference>
<dbReference type="SMR" id="Q28Q12"/>
<dbReference type="STRING" id="290400.Jann_2283"/>
<dbReference type="KEGG" id="jan:Jann_2283"/>
<dbReference type="eggNOG" id="COG0536">
    <property type="taxonomic scope" value="Bacteria"/>
</dbReference>
<dbReference type="HOGENOM" id="CLU_011747_2_0_5"/>
<dbReference type="OrthoDB" id="9807318at2"/>
<dbReference type="Proteomes" id="UP000008326">
    <property type="component" value="Chromosome"/>
</dbReference>
<dbReference type="GO" id="GO:0005737">
    <property type="term" value="C:cytoplasm"/>
    <property type="evidence" value="ECO:0007669"/>
    <property type="project" value="UniProtKB-SubCell"/>
</dbReference>
<dbReference type="GO" id="GO:0005525">
    <property type="term" value="F:GTP binding"/>
    <property type="evidence" value="ECO:0007669"/>
    <property type="project" value="UniProtKB-UniRule"/>
</dbReference>
<dbReference type="GO" id="GO:0003924">
    <property type="term" value="F:GTPase activity"/>
    <property type="evidence" value="ECO:0007669"/>
    <property type="project" value="UniProtKB-UniRule"/>
</dbReference>
<dbReference type="GO" id="GO:0000287">
    <property type="term" value="F:magnesium ion binding"/>
    <property type="evidence" value="ECO:0007669"/>
    <property type="project" value="InterPro"/>
</dbReference>
<dbReference type="GO" id="GO:0042254">
    <property type="term" value="P:ribosome biogenesis"/>
    <property type="evidence" value="ECO:0007669"/>
    <property type="project" value="UniProtKB-UniRule"/>
</dbReference>
<dbReference type="CDD" id="cd01898">
    <property type="entry name" value="Obg"/>
    <property type="match status" value="1"/>
</dbReference>
<dbReference type="FunFam" id="2.70.210.12:FF:000001">
    <property type="entry name" value="GTPase Obg"/>
    <property type="match status" value="1"/>
</dbReference>
<dbReference type="Gene3D" id="2.70.210.12">
    <property type="entry name" value="GTP1/OBG domain"/>
    <property type="match status" value="1"/>
</dbReference>
<dbReference type="Gene3D" id="3.40.50.300">
    <property type="entry name" value="P-loop containing nucleotide triphosphate hydrolases"/>
    <property type="match status" value="1"/>
</dbReference>
<dbReference type="HAMAP" id="MF_01454">
    <property type="entry name" value="GTPase_Obg"/>
    <property type="match status" value="1"/>
</dbReference>
<dbReference type="InterPro" id="IPR031167">
    <property type="entry name" value="G_OBG"/>
</dbReference>
<dbReference type="InterPro" id="IPR006073">
    <property type="entry name" value="GTP-bd"/>
</dbReference>
<dbReference type="InterPro" id="IPR014100">
    <property type="entry name" value="GTP-bd_Obg/CgtA"/>
</dbReference>
<dbReference type="InterPro" id="IPR006074">
    <property type="entry name" value="GTP1-OBG_CS"/>
</dbReference>
<dbReference type="InterPro" id="IPR006169">
    <property type="entry name" value="GTP1_OBG_dom"/>
</dbReference>
<dbReference type="InterPro" id="IPR036726">
    <property type="entry name" value="GTP1_OBG_dom_sf"/>
</dbReference>
<dbReference type="InterPro" id="IPR045086">
    <property type="entry name" value="OBG_GTPase"/>
</dbReference>
<dbReference type="InterPro" id="IPR027417">
    <property type="entry name" value="P-loop_NTPase"/>
</dbReference>
<dbReference type="NCBIfam" id="TIGR02729">
    <property type="entry name" value="Obg_CgtA"/>
    <property type="match status" value="1"/>
</dbReference>
<dbReference type="NCBIfam" id="NF008955">
    <property type="entry name" value="PRK12297.1"/>
    <property type="match status" value="1"/>
</dbReference>
<dbReference type="NCBIfam" id="NF008956">
    <property type="entry name" value="PRK12299.1"/>
    <property type="match status" value="1"/>
</dbReference>
<dbReference type="PANTHER" id="PTHR11702">
    <property type="entry name" value="DEVELOPMENTALLY REGULATED GTP-BINDING PROTEIN-RELATED"/>
    <property type="match status" value="1"/>
</dbReference>
<dbReference type="PANTHER" id="PTHR11702:SF31">
    <property type="entry name" value="MITOCHONDRIAL RIBOSOME-ASSOCIATED GTPASE 2"/>
    <property type="match status" value="1"/>
</dbReference>
<dbReference type="Pfam" id="PF01018">
    <property type="entry name" value="GTP1_OBG"/>
    <property type="match status" value="1"/>
</dbReference>
<dbReference type="Pfam" id="PF01926">
    <property type="entry name" value="MMR_HSR1"/>
    <property type="match status" value="1"/>
</dbReference>
<dbReference type="PIRSF" id="PIRSF002401">
    <property type="entry name" value="GTP_bd_Obg/CgtA"/>
    <property type="match status" value="1"/>
</dbReference>
<dbReference type="PRINTS" id="PR00326">
    <property type="entry name" value="GTP1OBG"/>
</dbReference>
<dbReference type="SUPFAM" id="SSF82051">
    <property type="entry name" value="Obg GTP-binding protein N-terminal domain"/>
    <property type="match status" value="1"/>
</dbReference>
<dbReference type="SUPFAM" id="SSF52540">
    <property type="entry name" value="P-loop containing nucleoside triphosphate hydrolases"/>
    <property type="match status" value="1"/>
</dbReference>
<dbReference type="PROSITE" id="PS51710">
    <property type="entry name" value="G_OBG"/>
    <property type="match status" value="1"/>
</dbReference>
<dbReference type="PROSITE" id="PS00905">
    <property type="entry name" value="GTP1_OBG"/>
    <property type="match status" value="1"/>
</dbReference>
<dbReference type="PROSITE" id="PS51883">
    <property type="entry name" value="OBG"/>
    <property type="match status" value="1"/>
</dbReference>
<name>OBG_JANSC</name>
<feature type="chain" id="PRO_0000385983" description="GTPase Obg">
    <location>
        <begin position="1"/>
        <end position="344"/>
    </location>
</feature>
<feature type="domain" description="Obg" evidence="2">
    <location>
        <begin position="1"/>
        <end position="159"/>
    </location>
</feature>
<feature type="domain" description="OBG-type G" evidence="1">
    <location>
        <begin position="160"/>
        <end position="326"/>
    </location>
</feature>
<feature type="binding site" evidence="1">
    <location>
        <begin position="166"/>
        <end position="173"/>
    </location>
    <ligand>
        <name>GTP</name>
        <dbReference type="ChEBI" id="CHEBI:37565"/>
    </ligand>
</feature>
<feature type="binding site" evidence="1">
    <location>
        <position position="173"/>
    </location>
    <ligand>
        <name>Mg(2+)</name>
        <dbReference type="ChEBI" id="CHEBI:18420"/>
    </ligand>
</feature>
<feature type="binding site" evidence="1">
    <location>
        <begin position="191"/>
        <end position="195"/>
    </location>
    <ligand>
        <name>GTP</name>
        <dbReference type="ChEBI" id="CHEBI:37565"/>
    </ligand>
</feature>
<feature type="binding site" evidence="1">
    <location>
        <position position="193"/>
    </location>
    <ligand>
        <name>Mg(2+)</name>
        <dbReference type="ChEBI" id="CHEBI:18420"/>
    </ligand>
</feature>
<feature type="binding site" evidence="1">
    <location>
        <begin position="212"/>
        <end position="215"/>
    </location>
    <ligand>
        <name>GTP</name>
        <dbReference type="ChEBI" id="CHEBI:37565"/>
    </ligand>
</feature>
<feature type="binding site" evidence="1">
    <location>
        <begin position="279"/>
        <end position="282"/>
    </location>
    <ligand>
        <name>GTP</name>
        <dbReference type="ChEBI" id="CHEBI:37565"/>
    </ligand>
</feature>
<feature type="binding site" evidence="1">
    <location>
        <begin position="307"/>
        <end position="309"/>
    </location>
    <ligand>
        <name>GTP</name>
        <dbReference type="ChEBI" id="CHEBI:37565"/>
    </ligand>
</feature>
<accession>Q28Q12</accession>
<keyword id="KW-0963">Cytoplasm</keyword>
<keyword id="KW-0342">GTP-binding</keyword>
<keyword id="KW-0378">Hydrolase</keyword>
<keyword id="KW-0460">Magnesium</keyword>
<keyword id="KW-0479">Metal-binding</keyword>
<keyword id="KW-0547">Nucleotide-binding</keyword>
<keyword id="KW-1185">Reference proteome</keyword>
<organism>
    <name type="scientific">Jannaschia sp. (strain CCS1)</name>
    <dbReference type="NCBI Taxonomy" id="290400"/>
    <lineage>
        <taxon>Bacteria</taxon>
        <taxon>Pseudomonadati</taxon>
        <taxon>Pseudomonadota</taxon>
        <taxon>Alphaproteobacteria</taxon>
        <taxon>Rhodobacterales</taxon>
        <taxon>Roseobacteraceae</taxon>
        <taxon>Jannaschia</taxon>
    </lineage>
</organism>
<comment type="function">
    <text evidence="1">An essential GTPase which binds GTP, GDP and possibly (p)ppGpp with moderate affinity, with high nucleotide exchange rates and a fairly low GTP hydrolysis rate. Plays a role in control of the cell cycle, stress response, ribosome biogenesis and in those bacteria that undergo differentiation, in morphogenesis control.</text>
</comment>
<comment type="cofactor">
    <cofactor evidence="1">
        <name>Mg(2+)</name>
        <dbReference type="ChEBI" id="CHEBI:18420"/>
    </cofactor>
</comment>
<comment type="subunit">
    <text evidence="1">Monomer.</text>
</comment>
<comment type="subcellular location">
    <subcellularLocation>
        <location evidence="1">Cytoplasm</location>
    </subcellularLocation>
</comment>
<comment type="similarity">
    <text evidence="1">Belongs to the TRAFAC class OBG-HflX-like GTPase superfamily. OBG GTPase family.</text>
</comment>
<comment type="sequence caution" evidence="3">
    <conflict type="erroneous initiation">
        <sequence resource="EMBL-CDS" id="ABD55200"/>
    </conflict>
    <text>Extended N-terminus.</text>
</comment>
<evidence type="ECO:0000255" key="1">
    <source>
        <dbReference type="HAMAP-Rule" id="MF_01454"/>
    </source>
</evidence>
<evidence type="ECO:0000255" key="2">
    <source>
        <dbReference type="PROSITE-ProRule" id="PRU01231"/>
    </source>
</evidence>
<evidence type="ECO:0000305" key="3"/>
<gene>
    <name evidence="1" type="primary">obg</name>
    <name type="ordered locus">Jann_2283</name>
</gene>